<proteinExistence type="inferred from homology"/>
<geneLocation type="chloroplast"/>
<organism>
    <name type="scientific">Pyropia yezoensis</name>
    <name type="common">Susabi-nori</name>
    <name type="synonym">Porphyra yezoensis</name>
    <dbReference type="NCBI Taxonomy" id="2788"/>
    <lineage>
        <taxon>Eukaryota</taxon>
        <taxon>Rhodophyta</taxon>
        <taxon>Bangiophyceae</taxon>
        <taxon>Bangiales</taxon>
        <taxon>Bangiaceae</taxon>
        <taxon>Pyropia</taxon>
    </lineage>
</organism>
<accession>Q1XDC3</accession>
<comment type="function">
    <text evidence="1">Could be involved in cytochrome c synthesis.</text>
</comment>
<comment type="subcellular location">
    <subcellularLocation>
        <location evidence="3">Plastid</location>
        <location evidence="3">Chloroplast membrane</location>
        <topology evidence="3">Multi-pass membrane protein</topology>
    </subcellularLocation>
</comment>
<comment type="similarity">
    <text evidence="3">Belongs to the DsbD family.</text>
</comment>
<keyword id="KW-0150">Chloroplast</keyword>
<keyword id="KW-0201">Cytochrome c-type biogenesis</keyword>
<keyword id="KW-0472">Membrane</keyword>
<keyword id="KW-0934">Plastid</keyword>
<keyword id="KW-0812">Transmembrane</keyword>
<keyword id="KW-1133">Transmembrane helix</keyword>
<dbReference type="EMBL" id="AP006715">
    <property type="protein sequence ID" value="BAE92488.1"/>
    <property type="molecule type" value="Genomic_DNA"/>
</dbReference>
<dbReference type="RefSeq" id="YP_537045.1">
    <property type="nucleotide sequence ID" value="NC_007932.1"/>
</dbReference>
<dbReference type="GeneID" id="3978873"/>
<dbReference type="GO" id="GO:0031969">
    <property type="term" value="C:chloroplast membrane"/>
    <property type="evidence" value="ECO:0007669"/>
    <property type="project" value="UniProtKB-SubCell"/>
</dbReference>
<dbReference type="GO" id="GO:0017004">
    <property type="term" value="P:cytochrome complex assembly"/>
    <property type="evidence" value="ECO:0007669"/>
    <property type="project" value="UniProtKB-KW"/>
</dbReference>
<dbReference type="InterPro" id="IPR003834">
    <property type="entry name" value="Cyt_c_assmbl_TM_dom"/>
</dbReference>
<dbReference type="InterPro" id="IPR051790">
    <property type="entry name" value="Cytochrome_c-biogenesis_DsbD"/>
</dbReference>
<dbReference type="PANTHER" id="PTHR31272:SF6">
    <property type="entry name" value="CYTOCHROME C-TYPE BIOGENESIS CCDA-LIKE CHLOROPLASTIC PROTEIN"/>
    <property type="match status" value="1"/>
</dbReference>
<dbReference type="PANTHER" id="PTHR31272">
    <property type="entry name" value="CYTOCHROME C-TYPE BIOGENESIS PROTEIN HI_1454-RELATED"/>
    <property type="match status" value="1"/>
</dbReference>
<dbReference type="Pfam" id="PF02683">
    <property type="entry name" value="DsbD_TM"/>
    <property type="match status" value="1"/>
</dbReference>
<protein>
    <recommendedName>
        <fullName>Putative cytochrome c-type biogenesis protein DbsD-like</fullName>
    </recommendedName>
</protein>
<feature type="chain" id="PRO_0000277342" description="Putative cytochrome c-type biogenesis protein DbsD-like">
    <location>
        <begin position="1"/>
        <end position="224"/>
    </location>
</feature>
<feature type="transmembrane region" description="Helical" evidence="2">
    <location>
        <begin position="32"/>
        <end position="52"/>
    </location>
</feature>
<feature type="transmembrane region" description="Helical" evidence="2">
    <location>
        <begin position="74"/>
        <end position="94"/>
    </location>
</feature>
<feature type="transmembrane region" description="Helical" evidence="2">
    <location>
        <begin position="104"/>
        <end position="124"/>
    </location>
</feature>
<feature type="transmembrane region" description="Helical" evidence="2">
    <location>
        <begin position="150"/>
        <end position="170"/>
    </location>
</feature>
<feature type="transmembrane region" description="Helical" evidence="2">
    <location>
        <begin position="176"/>
        <end position="196"/>
    </location>
</feature>
<evidence type="ECO:0000250" key="1"/>
<evidence type="ECO:0000255" key="2"/>
<evidence type="ECO:0000305" key="3"/>
<reference key="1">
    <citation type="submission" date="2003-11" db="EMBL/GenBank/DDBJ databases">
        <title>Whole genome sequence of Porphyra yezoensis chloroplast.</title>
        <authorList>
            <person name="Kunimoto M."/>
            <person name="Morishima K."/>
            <person name="Yoshikawa M."/>
            <person name="Fukuda S."/>
            <person name="Kobayashi T."/>
            <person name="Kobayashi M."/>
            <person name="Okazaki T."/>
            <person name="Ohara I."/>
            <person name="Nakayama I."/>
        </authorList>
    </citation>
    <scope>NUCLEOTIDE SEQUENCE [LARGE SCALE GENOMIC DNA]</scope>
    <source>
        <strain>U-51</strain>
    </source>
</reference>
<sequence>MKLDLFVYNSQHFVNNITLYQLNHLNSTSFSFIFLSGLFTSLSPCIISILPVCILYIAGETQKLNPINKTKNLFLFCLGTISSFITLGILATLITKTYSQFFNGIPTISAVVIIYMGLNLLNIVHINSPKFNGLVTNNNYNFKMYLSGVGIGIAISSCSTPIFVTLLVWINSTQKIFTGLIFILIYSIGYIFPIIIGSIFSTSFLKLTESLSGIIMAPSVELCY</sequence>
<name>YCXN_PYRYE</name>